<reference key="1">
    <citation type="journal article" date="2000" name="Science">
        <title>The genome sequence of Drosophila melanogaster.</title>
        <authorList>
            <person name="Adams M.D."/>
            <person name="Celniker S.E."/>
            <person name="Holt R.A."/>
            <person name="Evans C.A."/>
            <person name="Gocayne J.D."/>
            <person name="Amanatides P.G."/>
            <person name="Scherer S.E."/>
            <person name="Li P.W."/>
            <person name="Hoskins R.A."/>
            <person name="Galle R.F."/>
            <person name="George R.A."/>
            <person name="Lewis S.E."/>
            <person name="Richards S."/>
            <person name="Ashburner M."/>
            <person name="Henderson S.N."/>
            <person name="Sutton G.G."/>
            <person name="Wortman J.R."/>
            <person name="Yandell M.D."/>
            <person name="Zhang Q."/>
            <person name="Chen L.X."/>
            <person name="Brandon R.C."/>
            <person name="Rogers Y.-H.C."/>
            <person name="Blazej R.G."/>
            <person name="Champe M."/>
            <person name="Pfeiffer B.D."/>
            <person name="Wan K.H."/>
            <person name="Doyle C."/>
            <person name="Baxter E.G."/>
            <person name="Helt G."/>
            <person name="Nelson C.R."/>
            <person name="Miklos G.L.G."/>
            <person name="Abril J.F."/>
            <person name="Agbayani A."/>
            <person name="An H.-J."/>
            <person name="Andrews-Pfannkoch C."/>
            <person name="Baldwin D."/>
            <person name="Ballew R.M."/>
            <person name="Basu A."/>
            <person name="Baxendale J."/>
            <person name="Bayraktaroglu L."/>
            <person name="Beasley E.M."/>
            <person name="Beeson K.Y."/>
            <person name="Benos P.V."/>
            <person name="Berman B.P."/>
            <person name="Bhandari D."/>
            <person name="Bolshakov S."/>
            <person name="Borkova D."/>
            <person name="Botchan M.R."/>
            <person name="Bouck J."/>
            <person name="Brokstein P."/>
            <person name="Brottier P."/>
            <person name="Burtis K.C."/>
            <person name="Busam D.A."/>
            <person name="Butler H."/>
            <person name="Cadieu E."/>
            <person name="Center A."/>
            <person name="Chandra I."/>
            <person name="Cherry J.M."/>
            <person name="Cawley S."/>
            <person name="Dahlke C."/>
            <person name="Davenport L.B."/>
            <person name="Davies P."/>
            <person name="de Pablos B."/>
            <person name="Delcher A."/>
            <person name="Deng Z."/>
            <person name="Mays A.D."/>
            <person name="Dew I."/>
            <person name="Dietz S.M."/>
            <person name="Dodson K."/>
            <person name="Doup L.E."/>
            <person name="Downes M."/>
            <person name="Dugan-Rocha S."/>
            <person name="Dunkov B.C."/>
            <person name="Dunn P."/>
            <person name="Durbin K.J."/>
            <person name="Evangelista C.C."/>
            <person name="Ferraz C."/>
            <person name="Ferriera S."/>
            <person name="Fleischmann W."/>
            <person name="Fosler C."/>
            <person name="Gabrielian A.E."/>
            <person name="Garg N.S."/>
            <person name="Gelbart W.M."/>
            <person name="Glasser K."/>
            <person name="Glodek A."/>
            <person name="Gong F."/>
            <person name="Gorrell J.H."/>
            <person name="Gu Z."/>
            <person name="Guan P."/>
            <person name="Harris M."/>
            <person name="Harris N.L."/>
            <person name="Harvey D.A."/>
            <person name="Heiman T.J."/>
            <person name="Hernandez J.R."/>
            <person name="Houck J."/>
            <person name="Hostin D."/>
            <person name="Houston K.A."/>
            <person name="Howland T.J."/>
            <person name="Wei M.-H."/>
            <person name="Ibegwam C."/>
            <person name="Jalali M."/>
            <person name="Kalush F."/>
            <person name="Karpen G.H."/>
            <person name="Ke Z."/>
            <person name="Kennison J.A."/>
            <person name="Ketchum K.A."/>
            <person name="Kimmel B.E."/>
            <person name="Kodira C.D."/>
            <person name="Kraft C.L."/>
            <person name="Kravitz S."/>
            <person name="Kulp D."/>
            <person name="Lai Z."/>
            <person name="Lasko P."/>
            <person name="Lei Y."/>
            <person name="Levitsky A.A."/>
            <person name="Li J.H."/>
            <person name="Li Z."/>
            <person name="Liang Y."/>
            <person name="Lin X."/>
            <person name="Liu X."/>
            <person name="Mattei B."/>
            <person name="McIntosh T.C."/>
            <person name="McLeod M.P."/>
            <person name="McPherson D."/>
            <person name="Merkulov G."/>
            <person name="Milshina N.V."/>
            <person name="Mobarry C."/>
            <person name="Morris J."/>
            <person name="Moshrefi A."/>
            <person name="Mount S.M."/>
            <person name="Moy M."/>
            <person name="Murphy B."/>
            <person name="Murphy L."/>
            <person name="Muzny D.M."/>
            <person name="Nelson D.L."/>
            <person name="Nelson D.R."/>
            <person name="Nelson K.A."/>
            <person name="Nixon K."/>
            <person name="Nusskern D.R."/>
            <person name="Pacleb J.M."/>
            <person name="Palazzolo M."/>
            <person name="Pittman G.S."/>
            <person name="Pan S."/>
            <person name="Pollard J."/>
            <person name="Puri V."/>
            <person name="Reese M.G."/>
            <person name="Reinert K."/>
            <person name="Remington K."/>
            <person name="Saunders R.D.C."/>
            <person name="Scheeler F."/>
            <person name="Shen H."/>
            <person name="Shue B.C."/>
            <person name="Siden-Kiamos I."/>
            <person name="Simpson M."/>
            <person name="Skupski M.P."/>
            <person name="Smith T.J."/>
            <person name="Spier E."/>
            <person name="Spradling A.C."/>
            <person name="Stapleton M."/>
            <person name="Strong R."/>
            <person name="Sun E."/>
            <person name="Svirskas R."/>
            <person name="Tector C."/>
            <person name="Turner R."/>
            <person name="Venter E."/>
            <person name="Wang A.H."/>
            <person name="Wang X."/>
            <person name="Wang Z.-Y."/>
            <person name="Wassarman D.A."/>
            <person name="Weinstock G.M."/>
            <person name="Weissenbach J."/>
            <person name="Williams S.M."/>
            <person name="Woodage T."/>
            <person name="Worley K.C."/>
            <person name="Wu D."/>
            <person name="Yang S."/>
            <person name="Yao Q.A."/>
            <person name="Ye J."/>
            <person name="Yeh R.-F."/>
            <person name="Zaveri J.S."/>
            <person name="Zhan M."/>
            <person name="Zhang G."/>
            <person name="Zhao Q."/>
            <person name="Zheng L."/>
            <person name="Zheng X.H."/>
            <person name="Zhong F.N."/>
            <person name="Zhong W."/>
            <person name="Zhou X."/>
            <person name="Zhu S.C."/>
            <person name="Zhu X."/>
            <person name="Smith H.O."/>
            <person name="Gibbs R.A."/>
            <person name="Myers E.W."/>
            <person name="Rubin G.M."/>
            <person name="Venter J.C."/>
        </authorList>
    </citation>
    <scope>NUCLEOTIDE SEQUENCE [LARGE SCALE GENOMIC DNA]</scope>
    <source>
        <strain>Berkeley</strain>
    </source>
</reference>
<reference key="2">
    <citation type="journal article" date="2002" name="Genome Biol.">
        <title>Annotation of the Drosophila melanogaster euchromatic genome: a systematic review.</title>
        <authorList>
            <person name="Misra S."/>
            <person name="Crosby M.A."/>
            <person name="Mungall C.J."/>
            <person name="Matthews B.B."/>
            <person name="Campbell K.S."/>
            <person name="Hradecky P."/>
            <person name="Huang Y."/>
            <person name="Kaminker J.S."/>
            <person name="Millburn G.H."/>
            <person name="Prochnik S.E."/>
            <person name="Smith C.D."/>
            <person name="Tupy J.L."/>
            <person name="Whitfield E.J."/>
            <person name="Bayraktaroglu L."/>
            <person name="Berman B.P."/>
            <person name="Bettencourt B.R."/>
            <person name="Celniker S.E."/>
            <person name="de Grey A.D.N.J."/>
            <person name="Drysdale R.A."/>
            <person name="Harris N.L."/>
            <person name="Richter J."/>
            <person name="Russo S."/>
            <person name="Schroeder A.J."/>
            <person name="Shu S.Q."/>
            <person name="Stapleton M."/>
            <person name="Yamada C."/>
            <person name="Ashburner M."/>
            <person name="Gelbart W.M."/>
            <person name="Rubin G.M."/>
            <person name="Lewis S.E."/>
        </authorList>
    </citation>
    <scope>GENOME REANNOTATION</scope>
    <source>
        <strain>Berkeley</strain>
    </source>
</reference>
<reference key="3">
    <citation type="journal article" date="2002" name="Genome Biol.">
        <title>A Drosophila full-length cDNA resource.</title>
        <authorList>
            <person name="Stapleton M."/>
            <person name="Carlson J.W."/>
            <person name="Brokstein P."/>
            <person name="Yu C."/>
            <person name="Champe M."/>
            <person name="George R.A."/>
            <person name="Guarin H."/>
            <person name="Kronmiller B."/>
            <person name="Pacleb J.M."/>
            <person name="Park S."/>
            <person name="Wan K.H."/>
            <person name="Rubin G.M."/>
            <person name="Celniker S.E."/>
        </authorList>
    </citation>
    <scope>NUCLEOTIDE SEQUENCE [LARGE SCALE MRNA]</scope>
    <source>
        <strain>Berkeley</strain>
        <tissue>Embryo</tissue>
    </source>
</reference>
<reference key="4">
    <citation type="journal article" date="2016" name="J. Biol. Chem.">
        <title>Ohgata, the single Drosophila ortholog of Human Cereblon, regulates insulin signaling-dependent organismic growth.</title>
        <authorList>
            <person name="Wakabayashi S."/>
            <person name="Sawamura N."/>
            <person name="Voelzmann A."/>
            <person name="Broemer M."/>
            <person name="Asahi T."/>
            <person name="Hoch M."/>
        </authorList>
    </citation>
    <scope>FUNCTION</scope>
    <scope>INTERACTION WITH PIC</scope>
    <scope>SUBCELLULAR LOCATION</scope>
    <scope>TISSUE SPECIFICITY</scope>
    <scope>UBIQUITINATION</scope>
    <scope>DISRUPTION PHENOTYPE</scope>
</reference>
<reference key="5">
    <citation type="journal article" date="2018" name="J. Neurosci.">
        <title>Cereblon Maintains Synaptic and Cognitive Function by Regulating BK Channel.</title>
        <authorList>
            <person name="Choi T.Y."/>
            <person name="Lee S.H."/>
            <person name="Kim Y.J."/>
            <person name="Bae J.R."/>
            <person name="Lee K.M."/>
            <person name="Jo Y."/>
            <person name="Kim S.J."/>
            <person name="Lee A.R."/>
            <person name="Choi S."/>
            <person name="Choi L.M."/>
            <person name="Bang S."/>
            <person name="Song M.R."/>
            <person name="Chung J."/>
            <person name="Lee K.J."/>
            <person name="Kim S.H."/>
            <person name="Park C.S."/>
            <person name="Choi S.Y."/>
        </authorList>
    </citation>
    <scope>FUNCTION</scope>
</reference>
<evidence type="ECO:0000250" key="1">
    <source>
        <dbReference type="UniProtKB" id="Q96SW2"/>
    </source>
</evidence>
<evidence type="ECO:0000255" key="2">
    <source>
        <dbReference type="PROSITE-ProRule" id="PRU01123"/>
    </source>
</evidence>
<evidence type="ECO:0000255" key="3">
    <source>
        <dbReference type="PROSITE-ProRule" id="PRU01124"/>
    </source>
</evidence>
<evidence type="ECO:0000256" key="4">
    <source>
        <dbReference type="SAM" id="MobiDB-lite"/>
    </source>
</evidence>
<evidence type="ECO:0000269" key="5">
    <source>
    </source>
</evidence>
<evidence type="ECO:0000269" key="6">
    <source>
    </source>
</evidence>
<evidence type="ECO:0000303" key="7">
    <source>
    </source>
</evidence>
<evidence type="ECO:0000303" key="8">
    <source>
    </source>
</evidence>
<evidence type="ECO:0000305" key="9"/>
<evidence type="ECO:0000312" key="10">
    <source>
        <dbReference type="FlyBase" id="FBgn0037780"/>
    </source>
</evidence>
<organism>
    <name type="scientific">Drosophila melanogaster</name>
    <name type="common">Fruit fly</name>
    <dbReference type="NCBI Taxonomy" id="7227"/>
    <lineage>
        <taxon>Eukaryota</taxon>
        <taxon>Metazoa</taxon>
        <taxon>Ecdysozoa</taxon>
        <taxon>Arthropoda</taxon>
        <taxon>Hexapoda</taxon>
        <taxon>Insecta</taxon>
        <taxon>Pterygota</taxon>
        <taxon>Neoptera</taxon>
        <taxon>Endopterygota</taxon>
        <taxon>Diptera</taxon>
        <taxon>Brachycera</taxon>
        <taxon>Muscomorpha</taxon>
        <taxon>Ephydroidea</taxon>
        <taxon>Drosophilidae</taxon>
        <taxon>Drosophila</taxon>
        <taxon>Sophophora</taxon>
    </lineage>
</organism>
<sequence length="585" mass="66453">MDEEENSEINSVQARDEDVQLEDQQSQGLQDRQVDVIEQAWNNAMPDEPSPPAEDAFQDPLATDGEGGDALEAMVENVLQDDTASEGSHPSSDMSLESPGSEDDSDLESLPHWMIPQNRLRSAVDMMVSQARNRDGGIAALLSGDNFLQRVRSMVFSQERRRSRTSEETSQEAAEQPVDPPPQQPPRPPIDIGFDTNLPAEHSYFGNHLSRVPGVDYLEVGSVHHMLIFLHQHILFPGEVLPFMIDGRMFDEDMPGLDGLIFGVSFPRLQPPEDNPHKLYGVTCQIYERGESGRGLVFYKSRALQRIVINCDDIKGSPQYIARNPTSKCFSKVKILPEYFLPEPLQTVDMGSMARFRDIPSMRDKYRRFQLSTTTWPSDACQEYSFSSIVERARQRLESQKIDTMPKCPIQLSFWLVRNLHLTEKMMRLTFLTDSVNTRLQLIKSTFKDETLFFCRYCNSSLALCSDLFAMSKHGVQTQYCNPEGYIHETNTVYRVISHAIGYSGEPSTKFSWFPGYQWHIILCKFCAQHVGWEFKAVHPNLTPKVFFGLAGSSVRIGKASEYSPFNGTTYVVRNMMRMISSDME</sequence>
<dbReference type="EMBL" id="AE014297">
    <property type="protein sequence ID" value="AAF54484.1"/>
    <property type="molecule type" value="Genomic_DNA"/>
</dbReference>
<dbReference type="EMBL" id="AY118943">
    <property type="protein sequence ID" value="AAM50803.1"/>
    <property type="molecule type" value="mRNA"/>
</dbReference>
<dbReference type="RefSeq" id="NP_649973.1">
    <property type="nucleotide sequence ID" value="NM_141716.3"/>
</dbReference>
<dbReference type="SMR" id="Q9VH36"/>
<dbReference type="BioGRID" id="66385">
    <property type="interactions" value="7"/>
</dbReference>
<dbReference type="FunCoup" id="Q9VH36">
    <property type="interactions" value="1463"/>
</dbReference>
<dbReference type="IntAct" id="Q9VH36">
    <property type="interactions" value="5"/>
</dbReference>
<dbReference type="STRING" id="7227.FBpp0081652"/>
<dbReference type="PaxDb" id="7227-FBpp0081652"/>
<dbReference type="DNASU" id="41230"/>
<dbReference type="EnsemblMetazoa" id="FBtr0082174">
    <property type="protein sequence ID" value="FBpp0081652"/>
    <property type="gene ID" value="FBgn0037780"/>
</dbReference>
<dbReference type="GeneID" id="41230"/>
<dbReference type="KEGG" id="dme:Dmel_CG3925"/>
<dbReference type="UCSC" id="CG3925-RA">
    <property type="organism name" value="d. melanogaster"/>
</dbReference>
<dbReference type="AGR" id="FB:FBgn0037780"/>
<dbReference type="CTD" id="41230"/>
<dbReference type="FlyBase" id="FBgn0037780">
    <property type="gene designation" value="ohgt"/>
</dbReference>
<dbReference type="VEuPathDB" id="VectorBase:FBgn0037780"/>
<dbReference type="eggNOG" id="KOG1400">
    <property type="taxonomic scope" value="Eukaryota"/>
</dbReference>
<dbReference type="GeneTree" id="ENSGT00390000016404"/>
<dbReference type="HOGENOM" id="CLU_028769_0_0_1"/>
<dbReference type="InParanoid" id="Q9VH36"/>
<dbReference type="OMA" id="SPQYIAR"/>
<dbReference type="OrthoDB" id="267517at2759"/>
<dbReference type="PhylomeDB" id="Q9VH36"/>
<dbReference type="UniPathway" id="UPA00143"/>
<dbReference type="BioGRID-ORCS" id="41230">
    <property type="hits" value="0 hits in 3 CRISPR screens"/>
</dbReference>
<dbReference type="GenomeRNAi" id="41230"/>
<dbReference type="PRO" id="PR:Q9VH36"/>
<dbReference type="Proteomes" id="UP000000803">
    <property type="component" value="Chromosome 3R"/>
</dbReference>
<dbReference type="Bgee" id="FBgn0037780">
    <property type="expression patterns" value="Expressed in oviduct (Drosophila) and 98 other cell types or tissues"/>
</dbReference>
<dbReference type="GO" id="GO:0031464">
    <property type="term" value="C:Cul4A-RING E3 ubiquitin ligase complex"/>
    <property type="evidence" value="ECO:0000318"/>
    <property type="project" value="GO_Central"/>
</dbReference>
<dbReference type="GO" id="GO:0005737">
    <property type="term" value="C:cytoplasm"/>
    <property type="evidence" value="ECO:0000250"/>
    <property type="project" value="FlyBase"/>
</dbReference>
<dbReference type="GO" id="GO:0005634">
    <property type="term" value="C:nucleus"/>
    <property type="evidence" value="ECO:0000314"/>
    <property type="project" value="FlyBase"/>
</dbReference>
<dbReference type="GO" id="GO:0046872">
    <property type="term" value="F:metal ion binding"/>
    <property type="evidence" value="ECO:0007669"/>
    <property type="project" value="UniProtKB-KW"/>
</dbReference>
<dbReference type="GO" id="GO:1900075">
    <property type="term" value="P:positive regulation of neuromuscular synaptic transmission"/>
    <property type="evidence" value="ECO:0000315"/>
    <property type="project" value="UniProtKB"/>
</dbReference>
<dbReference type="GO" id="GO:0030177">
    <property type="term" value="P:positive regulation of Wnt signaling pathway"/>
    <property type="evidence" value="ECO:0000315"/>
    <property type="project" value="FlyBase"/>
</dbReference>
<dbReference type="GO" id="GO:0016567">
    <property type="term" value="P:protein ubiquitination"/>
    <property type="evidence" value="ECO:0000250"/>
    <property type="project" value="FlyBase"/>
</dbReference>
<dbReference type="CDD" id="cd15777">
    <property type="entry name" value="CRBN_C_like"/>
    <property type="match status" value="1"/>
</dbReference>
<dbReference type="FunFam" id="2.170.150.20:FF:000005">
    <property type="entry name" value="Blast:Protein cereblon homolog"/>
    <property type="match status" value="1"/>
</dbReference>
<dbReference type="Gene3D" id="1.20.58.1480">
    <property type="match status" value="1"/>
</dbReference>
<dbReference type="Gene3D" id="2.170.150.20">
    <property type="entry name" value="Peptide methionine sulfoxide reductase"/>
    <property type="match status" value="1"/>
</dbReference>
<dbReference type="InterPro" id="IPR034750">
    <property type="entry name" value="CULT"/>
</dbReference>
<dbReference type="InterPro" id="IPR003111">
    <property type="entry name" value="Lon_prtase_N"/>
</dbReference>
<dbReference type="InterPro" id="IPR004910">
    <property type="entry name" value="Yippee/Mis18/Cereblon"/>
</dbReference>
<dbReference type="Pfam" id="PF03226">
    <property type="entry name" value="Yippee-Mis18"/>
    <property type="match status" value="1"/>
</dbReference>
<dbReference type="PROSITE" id="PS51788">
    <property type="entry name" value="CULT"/>
    <property type="match status" value="1"/>
</dbReference>
<dbReference type="PROSITE" id="PS51787">
    <property type="entry name" value="LON_N"/>
    <property type="match status" value="1"/>
</dbReference>
<keyword id="KW-0479">Metal-binding</keyword>
<keyword id="KW-0539">Nucleus</keyword>
<keyword id="KW-1185">Reference proteome</keyword>
<keyword id="KW-0832">Ubl conjugation</keyword>
<keyword id="KW-0833">Ubl conjugation pathway</keyword>
<keyword id="KW-0862">Zinc</keyword>
<feature type="chain" id="PRO_0000393881" description="Protein cereblon">
    <location>
        <begin position="1"/>
        <end position="585"/>
    </location>
</feature>
<feature type="domain" description="Lon N-terminal" evidence="2">
    <location>
        <begin position="225"/>
        <end position="451"/>
    </location>
</feature>
<feature type="domain" description="CULT" evidence="3">
    <location>
        <begin position="450"/>
        <end position="559"/>
    </location>
</feature>
<feature type="region of interest" description="Disordered" evidence="4">
    <location>
        <begin position="1"/>
        <end position="109"/>
    </location>
</feature>
<feature type="region of interest" description="Disordered" evidence="4">
    <location>
        <begin position="156"/>
        <end position="195"/>
    </location>
</feature>
<feature type="compositionally biased region" description="Polar residues" evidence="4">
    <location>
        <begin position="80"/>
        <end position="95"/>
    </location>
</feature>
<feature type="compositionally biased region" description="Basic and acidic residues" evidence="4">
    <location>
        <begin position="158"/>
        <end position="167"/>
    </location>
</feature>
<feature type="compositionally biased region" description="Pro residues" evidence="4">
    <location>
        <begin position="178"/>
        <end position="189"/>
    </location>
</feature>
<feature type="binding site" evidence="3">
    <location>
        <position position="455"/>
    </location>
    <ligand>
        <name>Zn(2+)</name>
        <dbReference type="ChEBI" id="CHEBI:29105"/>
    </ligand>
</feature>
<feature type="binding site" evidence="3">
    <location>
        <position position="458"/>
    </location>
    <ligand>
        <name>Zn(2+)</name>
        <dbReference type="ChEBI" id="CHEBI:29105"/>
    </ligand>
</feature>
<feature type="binding site" evidence="3">
    <location>
        <position position="524"/>
    </location>
    <ligand>
        <name>Zn(2+)</name>
        <dbReference type="ChEBI" id="CHEBI:29105"/>
    </ligand>
</feature>
<feature type="binding site" evidence="3">
    <location>
        <position position="527"/>
    </location>
    <ligand>
        <name>Zn(2+)</name>
        <dbReference type="ChEBI" id="CHEBI:29105"/>
    </ligand>
</feature>
<gene>
    <name evidence="7 10" type="primary">ohgt</name>
    <name evidence="8" type="synonym">crbn</name>
    <name evidence="10" type="ORF">CG3925</name>
</gene>
<name>CRBN_DROME</name>
<protein>
    <recommendedName>
        <fullName evidence="8">Protein cereblon</fullName>
    </recommendedName>
    <alternativeName>
        <fullName evidence="7">Protein ohgata</fullName>
    </alternativeName>
</protein>
<comment type="function">
    <text evidence="5 6 9">Substrate recognition component of a DCX (DDB1-CUL4-X-box) E3 protein ligase complex that mediates the ubiquitination and subsequent proteasomal degradation of target proteins (Probable). Has an essential role in mediating growth by negatively regulating insulin signaling (PubMed:27702999). It also has a role in maintaining presynaptic function in the neuromuscular junction synapses of third-instar larvae (PubMed:29530986).</text>
</comment>
<comment type="pathway">
    <text evidence="1">Protein modification; protein ubiquitination.</text>
</comment>
<comment type="subunit">
    <text evidence="1 5">Likely a component of a DCX (DDB1-CUL4-X-box) protein ligase complex (By similarity). May interact with pic/DDB1 (PubMed:27702999).</text>
</comment>
<comment type="subcellular location">
    <subcellularLocation>
        <location evidence="5">Nucleus</location>
    </subcellularLocation>
</comment>
<comment type="tissue specificity">
    <text evidence="5">Expressed in the fat body (at protein level).</text>
</comment>
<comment type="PTM">
    <text evidence="5">Ubiquitinated.</text>
</comment>
<comment type="disruption phenotype">
    <text evidence="5">Viable and fertile however, adults and larvae display an increase in body size and tissue growth as a result of increased cell number (PubMed:27702999). Overgrowth is due to an up-regulation in insulin-like signaling both systematically and in the fat body, which in turn results in the down-regulation of insulin-like peptide (ILP) inhibitors, conv and ImpL2, and thus allows increased activity of the ILPs (PubMed:27702999). RNAi-mediated knockdown in the fat body results in an increase in pupal length, adult body weight and posterior wing area (PubMed:27702999).</text>
</comment>
<comment type="miscellaneous">
    <text evidence="7">The name 'Ohgata' means 'large' in Japanese and refers to the overgrowth phenotype in mutants.</text>
</comment>
<comment type="similarity">
    <text evidence="9">Belongs to the CRBN family.</text>
</comment>
<proteinExistence type="evidence at protein level"/>
<accession>Q9VH36</accession>
<accession>Q9VH35</accession>